<dbReference type="EMBL" id="CU329670">
    <property type="protein sequence ID" value="CAB76035.1"/>
    <property type="molecule type" value="Genomic_DNA"/>
</dbReference>
<dbReference type="RefSeq" id="NP_593419.1">
    <property type="nucleotide sequence ID" value="NM_001018852.2"/>
</dbReference>
<dbReference type="BioGRID" id="279087">
    <property type="interactions" value="2"/>
</dbReference>
<dbReference type="PaxDb" id="4896-SPAP27G11.14c.1"/>
<dbReference type="EnsemblFungi" id="SPAP27G11.14c.1">
    <property type="protein sequence ID" value="SPAP27G11.14c.1:pep"/>
    <property type="gene ID" value="SPAP27G11.14c"/>
</dbReference>
<dbReference type="KEGG" id="spo:2542633"/>
<dbReference type="PomBase" id="SPAP27G11.14c"/>
<dbReference type="VEuPathDB" id="FungiDB:SPAP27G11.14c"/>
<dbReference type="HOGENOM" id="CLU_399639_0_0_1"/>
<dbReference type="InParanoid" id="Q9P7M4"/>
<dbReference type="PRO" id="PR:Q9P7M4"/>
<dbReference type="Proteomes" id="UP000002485">
    <property type="component" value="Chromosome I"/>
</dbReference>
<dbReference type="GO" id="GO:0005739">
    <property type="term" value="C:mitochondrion"/>
    <property type="evidence" value="ECO:0007005"/>
    <property type="project" value="PomBase"/>
</dbReference>
<gene>
    <name evidence="3" type="ORF">SPAP27G11.14c</name>
</gene>
<name>YIOE_SCHPO</name>
<proteinExistence type="predicted"/>
<accession>Q9P7M4</accession>
<evidence type="ECO:0000269" key="1">
    <source>
    </source>
</evidence>
<evidence type="ECO:0000305" key="2"/>
<evidence type="ECO:0000312" key="3">
    <source>
        <dbReference type="PomBase" id="SPAP27G11.14c"/>
    </source>
</evidence>
<feature type="chain" id="PRO_0000304019" description="Uncharacterized protein SPAP27G11.14c">
    <location>
        <begin position="1"/>
        <end position="689"/>
    </location>
</feature>
<reference key="1">
    <citation type="journal article" date="2002" name="Nature">
        <title>The genome sequence of Schizosaccharomyces pombe.</title>
        <authorList>
            <person name="Wood V."/>
            <person name="Gwilliam R."/>
            <person name="Rajandream M.A."/>
            <person name="Lyne M.H."/>
            <person name="Lyne R."/>
            <person name="Stewart A."/>
            <person name="Sgouros J.G."/>
            <person name="Peat N."/>
            <person name="Hayles J."/>
            <person name="Baker S.G."/>
            <person name="Basham D."/>
            <person name="Bowman S."/>
            <person name="Brooks K."/>
            <person name="Brown D."/>
            <person name="Brown S."/>
            <person name="Chillingworth T."/>
            <person name="Churcher C.M."/>
            <person name="Collins M."/>
            <person name="Connor R."/>
            <person name="Cronin A."/>
            <person name="Davis P."/>
            <person name="Feltwell T."/>
            <person name="Fraser A."/>
            <person name="Gentles S."/>
            <person name="Goble A."/>
            <person name="Hamlin N."/>
            <person name="Harris D.E."/>
            <person name="Hidalgo J."/>
            <person name="Hodgson G."/>
            <person name="Holroyd S."/>
            <person name="Hornsby T."/>
            <person name="Howarth S."/>
            <person name="Huckle E.J."/>
            <person name="Hunt S."/>
            <person name="Jagels K."/>
            <person name="James K.D."/>
            <person name="Jones L."/>
            <person name="Jones M."/>
            <person name="Leather S."/>
            <person name="McDonald S."/>
            <person name="McLean J."/>
            <person name="Mooney P."/>
            <person name="Moule S."/>
            <person name="Mungall K.L."/>
            <person name="Murphy L.D."/>
            <person name="Niblett D."/>
            <person name="Odell C."/>
            <person name="Oliver K."/>
            <person name="O'Neil S."/>
            <person name="Pearson D."/>
            <person name="Quail M.A."/>
            <person name="Rabbinowitsch E."/>
            <person name="Rutherford K.M."/>
            <person name="Rutter S."/>
            <person name="Saunders D."/>
            <person name="Seeger K."/>
            <person name="Sharp S."/>
            <person name="Skelton J."/>
            <person name="Simmonds M.N."/>
            <person name="Squares R."/>
            <person name="Squares S."/>
            <person name="Stevens K."/>
            <person name="Taylor K."/>
            <person name="Taylor R.G."/>
            <person name="Tivey A."/>
            <person name="Walsh S.V."/>
            <person name="Warren T."/>
            <person name="Whitehead S."/>
            <person name="Woodward J.R."/>
            <person name="Volckaert G."/>
            <person name="Aert R."/>
            <person name="Robben J."/>
            <person name="Grymonprez B."/>
            <person name="Weltjens I."/>
            <person name="Vanstreels E."/>
            <person name="Rieger M."/>
            <person name="Schaefer M."/>
            <person name="Mueller-Auer S."/>
            <person name="Gabel C."/>
            <person name="Fuchs M."/>
            <person name="Duesterhoeft A."/>
            <person name="Fritzc C."/>
            <person name="Holzer E."/>
            <person name="Moestl D."/>
            <person name="Hilbert H."/>
            <person name="Borzym K."/>
            <person name="Langer I."/>
            <person name="Beck A."/>
            <person name="Lehrach H."/>
            <person name="Reinhardt R."/>
            <person name="Pohl T.M."/>
            <person name="Eger P."/>
            <person name="Zimmermann W."/>
            <person name="Wedler H."/>
            <person name="Wambutt R."/>
            <person name="Purnelle B."/>
            <person name="Goffeau A."/>
            <person name="Cadieu E."/>
            <person name="Dreano S."/>
            <person name="Gloux S."/>
            <person name="Lelaure V."/>
            <person name="Mottier S."/>
            <person name="Galibert F."/>
            <person name="Aves S.J."/>
            <person name="Xiang Z."/>
            <person name="Hunt C."/>
            <person name="Moore K."/>
            <person name="Hurst S.M."/>
            <person name="Lucas M."/>
            <person name="Rochet M."/>
            <person name="Gaillardin C."/>
            <person name="Tallada V.A."/>
            <person name="Garzon A."/>
            <person name="Thode G."/>
            <person name="Daga R.R."/>
            <person name="Cruzado L."/>
            <person name="Jimenez J."/>
            <person name="Sanchez M."/>
            <person name="del Rey F."/>
            <person name="Benito J."/>
            <person name="Dominguez A."/>
            <person name="Revuelta J.L."/>
            <person name="Moreno S."/>
            <person name="Armstrong J."/>
            <person name="Forsburg S.L."/>
            <person name="Cerutti L."/>
            <person name="Lowe T."/>
            <person name="McCombie W.R."/>
            <person name="Paulsen I."/>
            <person name="Potashkin J."/>
            <person name="Shpakovski G.V."/>
            <person name="Ussery D."/>
            <person name="Barrell B.G."/>
            <person name="Nurse P."/>
        </authorList>
    </citation>
    <scope>NUCLEOTIDE SEQUENCE [LARGE SCALE GENOMIC DNA]</scope>
    <source>
        <strain>972 / ATCC 24843</strain>
    </source>
</reference>
<reference key="2">
    <citation type="journal article" date="2006" name="Nat. Biotechnol.">
        <title>ORFeome cloning and global analysis of protein localization in the fission yeast Schizosaccharomyces pombe.</title>
        <authorList>
            <person name="Matsuyama A."/>
            <person name="Arai R."/>
            <person name="Yashiroda Y."/>
            <person name="Shirai A."/>
            <person name="Kamata A."/>
            <person name="Sekido S."/>
            <person name="Kobayashi Y."/>
            <person name="Hashimoto A."/>
            <person name="Hamamoto M."/>
            <person name="Hiraoka Y."/>
            <person name="Horinouchi S."/>
            <person name="Yoshida M."/>
        </authorList>
    </citation>
    <scope>SUBCELLULAR LOCATION [LARGE SCALE ANALYSIS]</scope>
</reference>
<protein>
    <recommendedName>
        <fullName evidence="2">Uncharacterized protein SPAP27G11.14c</fullName>
    </recommendedName>
</protein>
<keyword id="KW-0496">Mitochondrion</keyword>
<keyword id="KW-1185">Reference proteome</keyword>
<sequence length="689" mass="79764">MNLLSHQLRDRFPIKAIISKADEVIFANYKHTNDFFKITATTYALINSVIVSNNCCNRRFHSTWQKKKHDDLTATVPVIDFRKNQKLTSIVVNAIQAIYWYARRSNCLTGINEAEYIWKSLIPESIFYHFVSLQSFIRKYLTDVFYCSAQKVILLSTDDSVVSSEKLYIRIASILSNANDKVSFKESSINTNTVFKDVYVEVSSHNDEFLLKNSSKCWAFTSLLVDPLHFMFSQIVFEDLSGKKIMKFEDTAVSTASNHSKQFTKGNLLAIKYIGGLYNAVYLMGLKKNLLAFVENEKDDLFVAKIFLLAYSSSKNRKKIVPVDVWDAMIDSLYETINVEETKKETYKFTRSIKTVIPNKLISNESISILSIPESEKTIYQNFDLYVSKFNVARKELSEKELFNNSFSSSFNTLLASLLVKPTLCLISYLMIAKKMVVLQEANRLFLKSFAHPFHLERYHLHAVAAMGGLYQIMSSTHLKNLFFCSRKGIALTKLHSQQYNESTLFQYLSEFVHQRQKSLTPKQRIAIQELILKFMQRNFENSLYHQSFSSHWFISRLLINPIRMLCWHITDVGKTLDLGEAEKLLKYNHKQCPYIIYPSSLKAVQKLGGLQCIIRNDNLSHIFNCSRKYIRVQRYSDDDLSESSLLPRLVNLLLFFENSMGEVAWNKLSQTLMDMFEKETKSNSLSDY</sequence>
<organism>
    <name type="scientific">Schizosaccharomyces pombe (strain 972 / ATCC 24843)</name>
    <name type="common">Fission yeast</name>
    <dbReference type="NCBI Taxonomy" id="284812"/>
    <lineage>
        <taxon>Eukaryota</taxon>
        <taxon>Fungi</taxon>
        <taxon>Dikarya</taxon>
        <taxon>Ascomycota</taxon>
        <taxon>Taphrinomycotina</taxon>
        <taxon>Schizosaccharomycetes</taxon>
        <taxon>Schizosaccharomycetales</taxon>
        <taxon>Schizosaccharomycetaceae</taxon>
        <taxon>Schizosaccharomyces</taxon>
    </lineage>
</organism>
<comment type="subcellular location">
    <subcellularLocation>
        <location evidence="1">Mitochondrion</location>
    </subcellularLocation>
</comment>